<comment type="function">
    <text evidence="1">Catalyzes the reversible reduction of methenyl-H(4)MPT(+) to methylene-H(4)MPT.</text>
</comment>
<comment type="catalytic activity">
    <reaction evidence="1">
        <text>5,10-methylenetetrahydromethanopterin + oxidized coenzyme F420-(gamma-L-Glu)(n) + 2 H(+) = 5,10-methenyl-5,6,7,8-tetrahydromethanopterin + reduced coenzyme F420-(gamma-L-Glu)(n)</text>
        <dbReference type="Rhea" id="RHEA:16721"/>
        <dbReference type="Rhea" id="RHEA-COMP:12939"/>
        <dbReference type="Rhea" id="RHEA-COMP:14378"/>
        <dbReference type="ChEBI" id="CHEBI:15378"/>
        <dbReference type="ChEBI" id="CHEBI:57818"/>
        <dbReference type="ChEBI" id="CHEBI:58337"/>
        <dbReference type="ChEBI" id="CHEBI:133980"/>
        <dbReference type="ChEBI" id="CHEBI:139511"/>
        <dbReference type="EC" id="1.5.98.1"/>
    </reaction>
</comment>
<comment type="pathway">
    <text evidence="1">One-carbon metabolism; methanogenesis from CO(2); 5,10-methylene-5,6,7,8-tetrahydromethanopterin from 5,10-methenyl-5,6,7,8-tetrahydromethanopterin (coenzyme F420 route): step 1/1.</text>
</comment>
<comment type="similarity">
    <text evidence="1">Belongs to the MTD family.</text>
</comment>
<protein>
    <recommendedName>
        <fullName evidence="1">F420-dependent methylenetetrahydromethanopterin dehydrogenase</fullName>
        <shortName evidence="1">MTD</shortName>
        <ecNumber evidence="1">1.5.98.1</ecNumber>
    </recommendedName>
    <alternativeName>
        <fullName evidence="1">Coenzyme F420-dependent N5,N10-methylenetetrahydromethanopterin dehydrogenase</fullName>
    </alternativeName>
</protein>
<organism>
    <name type="scientific">Methanoculleus marisnigri (strain ATCC 35101 / DSM 1498 / JR1)</name>
    <dbReference type="NCBI Taxonomy" id="368407"/>
    <lineage>
        <taxon>Archaea</taxon>
        <taxon>Methanobacteriati</taxon>
        <taxon>Methanobacteriota</taxon>
        <taxon>Stenosarchaea group</taxon>
        <taxon>Methanomicrobia</taxon>
        <taxon>Methanomicrobiales</taxon>
        <taxon>Methanomicrobiaceae</taxon>
        <taxon>Methanoculleus</taxon>
    </lineage>
</organism>
<sequence>MVVKVGIAKLGNIASGVMGELLLDERADREDMITFMATSGTKLQPEDIERVVSNMKAWGPDFCIVVSPNGVLPGPTQAREDLAAAGIPCIVITDDVTTKKEQFEALKASNFGYIIMKADAMIGARREFLDPIEMADYNGNLVKVLALTGAFRKMQMELDKVIDQVKAGKKGADLALPKVVMTSDKAVDGEFSNPYALAKARAAYEIAQSVAGVNVKGCFMTKEWEKYIPIVASAHEMMRQAMLLCEEARTLEKGVDAVIRKPHKKTGEIVSKTALISKPE</sequence>
<gene>
    <name evidence="1" type="primary">mtd</name>
    <name type="ordered locus">Memar_0562</name>
</gene>
<name>MTD_METMJ</name>
<feature type="chain" id="PRO_1000117812" description="F420-dependent methylenetetrahydromethanopterin dehydrogenase">
    <location>
        <begin position="1"/>
        <end position="280"/>
    </location>
</feature>
<reference key="1">
    <citation type="journal article" date="2009" name="Stand. Genomic Sci.">
        <title>Complete genome sequence of Methanoculleus marisnigri Romesser et al. 1981 type strain JR1.</title>
        <authorList>
            <person name="Anderson I.J."/>
            <person name="Sieprawska-Lupa M."/>
            <person name="Lapidus A."/>
            <person name="Nolan M."/>
            <person name="Copeland A."/>
            <person name="Glavina Del Rio T."/>
            <person name="Tice H."/>
            <person name="Dalin E."/>
            <person name="Barry K."/>
            <person name="Saunders E."/>
            <person name="Han C."/>
            <person name="Brettin T."/>
            <person name="Detter J.C."/>
            <person name="Bruce D."/>
            <person name="Mikhailova N."/>
            <person name="Pitluck S."/>
            <person name="Hauser L."/>
            <person name="Land M."/>
            <person name="Lucas S."/>
            <person name="Richardson P."/>
            <person name="Whitman W.B."/>
            <person name="Kyrpides N.C."/>
        </authorList>
    </citation>
    <scope>NUCLEOTIDE SEQUENCE [LARGE SCALE GENOMIC DNA]</scope>
    <source>
        <strain>ATCC 35101 / DSM 1498 / JR1</strain>
    </source>
</reference>
<proteinExistence type="inferred from homology"/>
<evidence type="ECO:0000255" key="1">
    <source>
        <dbReference type="HAMAP-Rule" id="MF_00058"/>
    </source>
</evidence>
<accession>A3CSZ5</accession>
<keyword id="KW-0484">Methanogenesis</keyword>
<keyword id="KW-0554">One-carbon metabolism</keyword>
<keyword id="KW-0560">Oxidoreductase</keyword>
<dbReference type="EC" id="1.5.98.1" evidence="1"/>
<dbReference type="EMBL" id="CP000562">
    <property type="protein sequence ID" value="ABN56495.1"/>
    <property type="molecule type" value="Genomic_DNA"/>
</dbReference>
<dbReference type="RefSeq" id="WP_011843405.1">
    <property type="nucleotide sequence ID" value="NC_009051.1"/>
</dbReference>
<dbReference type="SMR" id="A3CSZ5"/>
<dbReference type="STRING" id="368407.Memar_0562"/>
<dbReference type="GeneID" id="4848258"/>
<dbReference type="KEGG" id="mem:Memar_0562"/>
<dbReference type="eggNOG" id="arCOG04382">
    <property type="taxonomic scope" value="Archaea"/>
</dbReference>
<dbReference type="HOGENOM" id="CLU_1006890_0_0_2"/>
<dbReference type="OrthoDB" id="49844at2157"/>
<dbReference type="UniPathway" id="UPA00640">
    <property type="reaction ID" value="UER00695"/>
</dbReference>
<dbReference type="Proteomes" id="UP000002146">
    <property type="component" value="Chromosome"/>
</dbReference>
<dbReference type="GO" id="GO:0008901">
    <property type="term" value="F:ferredoxin hydrogenase activity"/>
    <property type="evidence" value="ECO:0007669"/>
    <property type="project" value="InterPro"/>
</dbReference>
<dbReference type="GO" id="GO:0030268">
    <property type="term" value="F:methylenetetrahydromethanopterin dehydrogenase activity"/>
    <property type="evidence" value="ECO:0007669"/>
    <property type="project" value="UniProtKB-UniRule"/>
</dbReference>
<dbReference type="GO" id="GO:0019386">
    <property type="term" value="P:methanogenesis, from carbon dioxide"/>
    <property type="evidence" value="ECO:0007669"/>
    <property type="project" value="UniProtKB-UniRule"/>
</dbReference>
<dbReference type="GO" id="GO:0006730">
    <property type="term" value="P:one-carbon metabolic process"/>
    <property type="evidence" value="ECO:0007669"/>
    <property type="project" value="UniProtKB-UniRule"/>
</dbReference>
<dbReference type="Gene3D" id="6.10.140.120">
    <property type="match status" value="1"/>
</dbReference>
<dbReference type="Gene3D" id="3.40.50.10830">
    <property type="entry name" value="F420-dependent methylenetetrahydromethanopterin dehydrogenase (MTD)"/>
    <property type="match status" value="1"/>
</dbReference>
<dbReference type="HAMAP" id="MF_00058">
    <property type="entry name" value="MTD"/>
    <property type="match status" value="1"/>
</dbReference>
<dbReference type="InterPro" id="IPR002844">
    <property type="entry name" value="MTD"/>
</dbReference>
<dbReference type="InterPro" id="IPR036080">
    <property type="entry name" value="MTD_sf"/>
</dbReference>
<dbReference type="NCBIfam" id="NF002162">
    <property type="entry name" value="PRK00994.1"/>
    <property type="match status" value="1"/>
</dbReference>
<dbReference type="Pfam" id="PF01993">
    <property type="entry name" value="MTD"/>
    <property type="match status" value="1"/>
</dbReference>
<dbReference type="PIRSF" id="PIRSF005627">
    <property type="entry name" value="MTD"/>
    <property type="match status" value="1"/>
</dbReference>
<dbReference type="SUPFAM" id="SSF102324">
    <property type="entry name" value="F420-dependent methylenetetrahydromethanopterin dehydrogenase (MTD)"/>
    <property type="match status" value="1"/>
</dbReference>